<gene>
    <name type="primary">dpyd-1</name>
    <name type="ORF">C25F6.3</name>
</gene>
<dbReference type="EC" id="1.3.1.2"/>
<dbReference type="EMBL" id="FO080672">
    <property type="protein sequence ID" value="CCD65682.1"/>
    <property type="molecule type" value="Genomic_DNA"/>
</dbReference>
<dbReference type="PIR" id="T15616">
    <property type="entry name" value="T15616"/>
</dbReference>
<dbReference type="RefSeq" id="NP_508927.2">
    <property type="nucleotide sequence ID" value="NM_076526.7"/>
</dbReference>
<dbReference type="SMR" id="Q18164"/>
<dbReference type="BioGRID" id="45751">
    <property type="interactions" value="13"/>
</dbReference>
<dbReference type="DIP" id="DIP-25332N"/>
<dbReference type="FunCoup" id="Q18164">
    <property type="interactions" value="839"/>
</dbReference>
<dbReference type="STRING" id="6239.C25F6.3.1"/>
<dbReference type="PaxDb" id="6239-C25F6.3"/>
<dbReference type="PeptideAtlas" id="Q18164"/>
<dbReference type="EnsemblMetazoa" id="C25F6.3.1">
    <property type="protein sequence ID" value="C25F6.3.1"/>
    <property type="gene ID" value="WBGene00016103"/>
</dbReference>
<dbReference type="GeneID" id="180818"/>
<dbReference type="KEGG" id="cel:CELE_C25F6.3"/>
<dbReference type="AGR" id="WB:WBGene00016103"/>
<dbReference type="CTD" id="180818"/>
<dbReference type="WormBase" id="C25F6.3">
    <property type="protein sequence ID" value="CE38489"/>
    <property type="gene ID" value="WBGene00016103"/>
    <property type="gene designation" value="dpyd-1"/>
</dbReference>
<dbReference type="eggNOG" id="KOG1799">
    <property type="taxonomic scope" value="Eukaryota"/>
</dbReference>
<dbReference type="GeneTree" id="ENSGT00500000044896"/>
<dbReference type="HOGENOM" id="CLU_003991_0_0_1"/>
<dbReference type="InParanoid" id="Q18164"/>
<dbReference type="OMA" id="SIHCQLQ"/>
<dbReference type="OrthoDB" id="4327079at2759"/>
<dbReference type="PhylomeDB" id="Q18164"/>
<dbReference type="Reactome" id="R-CEL-73621">
    <property type="pathway name" value="Pyrimidine catabolism"/>
</dbReference>
<dbReference type="SignaLink" id="Q18164"/>
<dbReference type="UniPathway" id="UPA00131"/>
<dbReference type="PRO" id="PR:Q18164"/>
<dbReference type="Proteomes" id="UP000001940">
    <property type="component" value="Chromosome X"/>
</dbReference>
<dbReference type="Bgee" id="WBGene00016103">
    <property type="expression patterns" value="Expressed in material anatomical entity and 4 other cell types or tissues"/>
</dbReference>
<dbReference type="GO" id="GO:0005737">
    <property type="term" value="C:cytoplasm"/>
    <property type="evidence" value="ECO:0000250"/>
    <property type="project" value="UniProtKB"/>
</dbReference>
<dbReference type="GO" id="GO:0005829">
    <property type="term" value="C:cytosol"/>
    <property type="evidence" value="ECO:0000318"/>
    <property type="project" value="GO_Central"/>
</dbReference>
<dbReference type="GO" id="GO:0051539">
    <property type="term" value="F:4 iron, 4 sulfur cluster binding"/>
    <property type="evidence" value="ECO:0007669"/>
    <property type="project" value="UniProtKB-KW"/>
</dbReference>
<dbReference type="GO" id="GO:0017113">
    <property type="term" value="F:dihydropyrimidine dehydrogenase (NADP+) activity"/>
    <property type="evidence" value="ECO:0000250"/>
    <property type="project" value="UniProtKB"/>
</dbReference>
<dbReference type="GO" id="GO:0046872">
    <property type="term" value="F:metal ion binding"/>
    <property type="evidence" value="ECO:0007669"/>
    <property type="project" value="UniProtKB-KW"/>
</dbReference>
<dbReference type="GO" id="GO:0050661">
    <property type="term" value="F:NADP binding"/>
    <property type="evidence" value="ECO:0000318"/>
    <property type="project" value="GO_Central"/>
</dbReference>
<dbReference type="GO" id="GO:0002058">
    <property type="term" value="F:uracil binding"/>
    <property type="evidence" value="ECO:0000318"/>
    <property type="project" value="GO_Central"/>
</dbReference>
<dbReference type="GO" id="GO:0019483">
    <property type="term" value="P:beta-alanine biosynthetic process"/>
    <property type="evidence" value="ECO:0007669"/>
    <property type="project" value="UniProtKB-UniPathway"/>
</dbReference>
<dbReference type="GO" id="GO:0006214">
    <property type="term" value="P:thymidine catabolic process"/>
    <property type="evidence" value="ECO:0000250"/>
    <property type="project" value="UniProtKB"/>
</dbReference>
<dbReference type="GO" id="GO:0006210">
    <property type="term" value="P:thymine catabolic process"/>
    <property type="evidence" value="ECO:0000318"/>
    <property type="project" value="GO_Central"/>
</dbReference>
<dbReference type="GO" id="GO:0006212">
    <property type="term" value="P:uracil catabolic process"/>
    <property type="evidence" value="ECO:0000250"/>
    <property type="project" value="UniProtKB"/>
</dbReference>
<dbReference type="CDD" id="cd02940">
    <property type="entry name" value="DHPD_FMN"/>
    <property type="match status" value="1"/>
</dbReference>
<dbReference type="FunFam" id="1.10.1060.10:FF:000007">
    <property type="entry name" value="Dihydropyrimidine dehydrogenase [NADP(+)]"/>
    <property type="match status" value="1"/>
</dbReference>
<dbReference type="FunFam" id="3.20.20.70:FF:000027">
    <property type="entry name" value="Dihydropyrimidine dehydrogenase [NADP(+)]"/>
    <property type="match status" value="1"/>
</dbReference>
<dbReference type="FunFam" id="3.30.70.20:FF:000023">
    <property type="entry name" value="Dihydropyrimidine dehydrogenase [NADP(+)]"/>
    <property type="match status" value="1"/>
</dbReference>
<dbReference type="FunFam" id="3.50.50.60:FF:000056">
    <property type="entry name" value="Dihydropyrimidine dehydrogenase [NADP(+)]"/>
    <property type="match status" value="1"/>
</dbReference>
<dbReference type="FunFam" id="3.50.50.60:FF:000061">
    <property type="entry name" value="Dihydropyrimidine dehydrogenase [NADP(+)]"/>
    <property type="match status" value="1"/>
</dbReference>
<dbReference type="Gene3D" id="3.30.70.20">
    <property type="match status" value="1"/>
</dbReference>
<dbReference type="Gene3D" id="3.20.20.70">
    <property type="entry name" value="Aldolase class I"/>
    <property type="match status" value="1"/>
</dbReference>
<dbReference type="Gene3D" id="1.10.1060.10">
    <property type="entry name" value="Alpha-helical ferredoxin"/>
    <property type="match status" value="1"/>
</dbReference>
<dbReference type="Gene3D" id="3.50.50.60">
    <property type="entry name" value="FAD/NAD(P)-binding domain"/>
    <property type="match status" value="2"/>
</dbReference>
<dbReference type="InterPro" id="IPR017896">
    <property type="entry name" value="4Fe4S_Fe-S-bd"/>
</dbReference>
<dbReference type="InterPro" id="IPR017900">
    <property type="entry name" value="4Fe4S_Fe_S_CS"/>
</dbReference>
<dbReference type="InterPro" id="IPR013785">
    <property type="entry name" value="Aldolase_TIM"/>
</dbReference>
<dbReference type="InterPro" id="IPR005720">
    <property type="entry name" value="Dihydroorotate_DH_cat"/>
</dbReference>
<dbReference type="InterPro" id="IPR028261">
    <property type="entry name" value="DPD_II"/>
</dbReference>
<dbReference type="InterPro" id="IPR036188">
    <property type="entry name" value="FAD/NAD-bd_sf"/>
</dbReference>
<dbReference type="InterPro" id="IPR023753">
    <property type="entry name" value="FAD/NAD-binding_dom"/>
</dbReference>
<dbReference type="InterPro" id="IPR009051">
    <property type="entry name" value="Helical_ferredxn"/>
</dbReference>
<dbReference type="PANTHER" id="PTHR43073">
    <property type="entry name" value="DIHYDROPYRIMIDINE DEHYDROGENASE [NADP(+)]"/>
    <property type="match status" value="1"/>
</dbReference>
<dbReference type="PANTHER" id="PTHR43073:SF2">
    <property type="entry name" value="DIHYDROPYRIMIDINE DEHYDROGENASE [NADP(+)]"/>
    <property type="match status" value="1"/>
</dbReference>
<dbReference type="Pfam" id="PF01180">
    <property type="entry name" value="DHO_dh"/>
    <property type="match status" value="1"/>
</dbReference>
<dbReference type="Pfam" id="PF14691">
    <property type="entry name" value="Fer4_20"/>
    <property type="match status" value="1"/>
</dbReference>
<dbReference type="Pfam" id="PF14697">
    <property type="entry name" value="Fer4_21"/>
    <property type="match status" value="1"/>
</dbReference>
<dbReference type="Pfam" id="PF07992">
    <property type="entry name" value="Pyr_redox_2"/>
    <property type="match status" value="1"/>
</dbReference>
<dbReference type="PRINTS" id="PR00419">
    <property type="entry name" value="ADXRDTASE"/>
</dbReference>
<dbReference type="SUPFAM" id="SSF54862">
    <property type="entry name" value="4Fe-4S ferredoxins"/>
    <property type="match status" value="1"/>
</dbReference>
<dbReference type="SUPFAM" id="SSF46548">
    <property type="entry name" value="alpha-helical ferredoxin"/>
    <property type="match status" value="1"/>
</dbReference>
<dbReference type="SUPFAM" id="SSF51395">
    <property type="entry name" value="FMN-linked oxidoreductases"/>
    <property type="match status" value="1"/>
</dbReference>
<dbReference type="SUPFAM" id="SSF51971">
    <property type="entry name" value="Nucleotide-binding domain"/>
    <property type="match status" value="2"/>
</dbReference>
<dbReference type="PROSITE" id="PS00198">
    <property type="entry name" value="4FE4S_FER_1"/>
    <property type="match status" value="1"/>
</dbReference>
<dbReference type="PROSITE" id="PS51379">
    <property type="entry name" value="4FE4S_FER_2"/>
    <property type="match status" value="3"/>
</dbReference>
<name>DPYD_CAEEL</name>
<comment type="function">
    <text evidence="1 3">Involved in pyrimidine base degradation. Catalyzes the reduction of uracil and thymine (By similarity). Involved in the degradation of the chemotherapeutic drug 5-fluorouracil.</text>
</comment>
<comment type="catalytic activity">
    <reaction>
        <text>5,6-dihydrouracil + NADP(+) = uracil + NADPH + H(+)</text>
        <dbReference type="Rhea" id="RHEA:18093"/>
        <dbReference type="ChEBI" id="CHEBI:15378"/>
        <dbReference type="ChEBI" id="CHEBI:15901"/>
        <dbReference type="ChEBI" id="CHEBI:17568"/>
        <dbReference type="ChEBI" id="CHEBI:57783"/>
        <dbReference type="ChEBI" id="CHEBI:58349"/>
        <dbReference type="EC" id="1.3.1.2"/>
    </reaction>
</comment>
<comment type="cofactor">
    <cofactor evidence="1">
        <name>[4Fe-4S] cluster</name>
        <dbReference type="ChEBI" id="CHEBI:49883"/>
    </cofactor>
    <text evidence="1">Binds 4 [4Fe-4S] clusters. Contains approximately 16 iron atoms per subunit.</text>
</comment>
<comment type="cofactor">
    <cofactor evidence="1">
        <name>FAD</name>
        <dbReference type="ChEBI" id="CHEBI:57692"/>
    </cofactor>
</comment>
<comment type="cofactor">
    <cofactor evidence="1">
        <name>FMN</name>
        <dbReference type="ChEBI" id="CHEBI:58210"/>
    </cofactor>
</comment>
<comment type="pathway">
    <text>Amino-acid biosynthesis; beta-alanine biosynthesis.</text>
</comment>
<comment type="miscellaneous">
    <text>Worms lacking dpyd-1 exhibit increased sensitivity (decreased survival) to the chemotherapeutic drug 5-fluorouracil.</text>
</comment>
<comment type="similarity">
    <text evidence="4">Belongs to the dihydropyrimidine dehydrogenase family.</text>
</comment>
<evidence type="ECO:0000250" key="1"/>
<evidence type="ECO:0000255" key="2">
    <source>
        <dbReference type="PROSITE-ProRule" id="PRU00711"/>
    </source>
</evidence>
<evidence type="ECO:0000269" key="3">
    <source>
    </source>
</evidence>
<evidence type="ECO:0000305" key="4"/>
<protein>
    <recommendedName>
        <fullName>Dihydropyrimidine dehydrogenase [NADP(+)]</fullName>
        <shortName>DHPDHase</shortName>
        <shortName>DPD</shortName>
        <ecNumber>1.3.1.2</ecNumber>
    </recommendedName>
    <alternativeName>
        <fullName>Dihydrothymine dehydrogenase</fullName>
    </alternativeName>
    <alternativeName>
        <fullName>Dihydrouracil dehydrogenase</fullName>
    </alternativeName>
</protein>
<reference key="1">
    <citation type="journal article" date="1998" name="Science">
        <title>Genome sequence of the nematode C. elegans: a platform for investigating biology.</title>
        <authorList>
            <consortium name="The C. elegans sequencing consortium"/>
        </authorList>
    </citation>
    <scope>NUCLEOTIDE SEQUENCE [LARGE SCALE GENOMIC DNA]</scope>
    <source>
        <strain>Bristol N2</strain>
    </source>
</reference>
<reference key="2">
    <citation type="journal article" date="2008" name="Mol. Cells">
        <title>Thymidylate synthase and dihydropyrimidine dehydrogenase levels are associated with response to 5-fluorouracil in Caenorhabditis elegans.</title>
        <authorList>
            <person name="Kim S."/>
            <person name="Park D.-H."/>
            <person name="Shim J."/>
        </authorList>
    </citation>
    <scope>FUNCTION</scope>
</reference>
<keyword id="KW-0004">4Fe-4S</keyword>
<keyword id="KW-0274">FAD</keyword>
<keyword id="KW-0285">Flavoprotein</keyword>
<keyword id="KW-0288">FMN</keyword>
<keyword id="KW-0408">Iron</keyword>
<keyword id="KW-0411">Iron-sulfur</keyword>
<keyword id="KW-0479">Metal-binding</keyword>
<keyword id="KW-0521">NADP</keyword>
<keyword id="KW-0547">Nucleotide-binding</keyword>
<keyword id="KW-0560">Oxidoreductase</keyword>
<keyword id="KW-1185">Reference proteome</keyword>
<keyword id="KW-0677">Repeat</keyword>
<feature type="chain" id="PRO_0000079997" description="Dihydropyrimidine dehydrogenase [NADP(+)]">
    <location>
        <begin position="1"/>
        <end position="1059"/>
    </location>
</feature>
<feature type="domain" description="4Fe-4S ferredoxin-type 1" evidence="2">
    <location>
        <begin position="84"/>
        <end position="118"/>
    </location>
</feature>
<feature type="domain" description="4Fe-4S ferredoxin-type 2" evidence="2">
    <location>
        <begin position="955"/>
        <end position="987"/>
    </location>
</feature>
<feature type="domain" description="4Fe-4S ferredoxin-type 3" evidence="2">
    <location>
        <begin position="989"/>
        <end position="1019"/>
    </location>
</feature>
<feature type="active site" description="Proton acceptor" evidence="1">
    <location>
        <position position="685"/>
    </location>
</feature>
<feature type="binding site" evidence="1">
    <location>
        <position position="94"/>
    </location>
    <ligand>
        <name>[4Fe-4S] cluster</name>
        <dbReference type="ChEBI" id="CHEBI:49883"/>
        <label>1</label>
    </ligand>
</feature>
<feature type="binding site" evidence="1">
    <location>
        <position position="97"/>
    </location>
    <ligand>
        <name>[4Fe-4S] cluster</name>
        <dbReference type="ChEBI" id="CHEBI:49883"/>
        <label>1</label>
    </ligand>
</feature>
<feature type="binding site" evidence="1">
    <location>
        <position position="102"/>
    </location>
    <ligand>
        <name>[4Fe-4S] cluster</name>
        <dbReference type="ChEBI" id="CHEBI:49883"/>
        <label>1</label>
    </ligand>
</feature>
<feature type="binding site" evidence="1">
    <location>
        <position position="106"/>
    </location>
    <ligand>
        <name>[4Fe-4S] cluster</name>
        <dbReference type="ChEBI" id="CHEBI:49883"/>
        <label>2</label>
    </ligand>
</feature>
<feature type="binding site" evidence="1">
    <location>
        <position position="145"/>
    </location>
    <ligand>
        <name>[4Fe-4S] cluster</name>
        <dbReference type="ChEBI" id="CHEBI:49883"/>
        <label>2</label>
    </ligand>
</feature>
<feature type="binding site" evidence="1">
    <location>
        <position position="151"/>
    </location>
    <ligand>
        <name>[4Fe-4S] cluster</name>
        <dbReference type="ChEBI" id="CHEBI:49883"/>
        <label>2</label>
    </ligand>
</feature>
<feature type="binding site" evidence="1">
    <location>
        <position position="155"/>
    </location>
    <ligand>
        <name>[4Fe-4S] cluster</name>
        <dbReference type="ChEBI" id="CHEBI:49883"/>
        <label>1</label>
    </ligand>
</feature>
<feature type="binding site" evidence="1">
    <location>
        <position position="171"/>
    </location>
    <ligand>
        <name>[4Fe-4S] cluster</name>
        <dbReference type="ChEBI" id="CHEBI:49883"/>
        <label>2</label>
    </ligand>
</feature>
<feature type="binding site" evidence="1">
    <location>
        <begin position="207"/>
        <end position="211"/>
    </location>
    <ligand>
        <name>FAD</name>
        <dbReference type="ChEBI" id="CHEBI:57692"/>
    </ligand>
</feature>
<feature type="binding site" evidence="1">
    <location>
        <begin position="231"/>
        <end position="239"/>
    </location>
    <ligand>
        <name>FAD</name>
        <dbReference type="ChEBI" id="CHEBI:57692"/>
    </ligand>
</feature>
<feature type="binding site" evidence="1">
    <location>
        <position position="248"/>
    </location>
    <ligand>
        <name>FAD</name>
        <dbReference type="ChEBI" id="CHEBI:57692"/>
    </ligand>
</feature>
<feature type="binding site" evidence="1">
    <location>
        <position position="274"/>
    </location>
    <ligand>
        <name>FAD</name>
        <dbReference type="ChEBI" id="CHEBI:57692"/>
    </ligand>
</feature>
<feature type="binding site" evidence="1">
    <location>
        <begin position="354"/>
        <end position="357"/>
    </location>
    <ligand>
        <name>NADP(+)</name>
        <dbReference type="ChEBI" id="CHEBI:58349"/>
    </ligand>
</feature>
<feature type="binding site" evidence="1">
    <location>
        <begin position="378"/>
        <end position="379"/>
    </location>
    <ligand>
        <name>NADP(+)</name>
        <dbReference type="ChEBI" id="CHEBI:58349"/>
    </ligand>
</feature>
<feature type="binding site" evidence="1">
    <location>
        <position position="385"/>
    </location>
    <ligand>
        <name>NADP(+)</name>
        <dbReference type="ChEBI" id="CHEBI:58349"/>
    </ligand>
</feature>
<feature type="binding site" evidence="1">
    <location>
        <begin position="451"/>
        <end position="453"/>
    </location>
    <ligand>
        <name>NADP(+)</name>
        <dbReference type="ChEBI" id="CHEBI:58349"/>
    </ligand>
</feature>
<feature type="binding site" evidence="1">
    <location>
        <begin position="494"/>
        <end position="503"/>
    </location>
    <ligand>
        <name>FAD</name>
        <dbReference type="ChEBI" id="CHEBI:57692"/>
    </ligand>
</feature>
<feature type="binding site" evidence="1">
    <location>
        <begin position="495"/>
        <end position="501"/>
    </location>
    <ligand>
        <name>NADP(+)</name>
        <dbReference type="ChEBI" id="CHEBI:58349"/>
    </ligand>
</feature>
<feature type="binding site" evidence="1">
    <location>
        <position position="564"/>
    </location>
    <ligand>
        <name>FMN</name>
        <dbReference type="ChEBI" id="CHEBI:58210"/>
    </ligand>
</feature>
<feature type="binding site" evidence="1">
    <location>
        <begin position="588"/>
        <end position="589"/>
    </location>
    <ligand>
        <name>FMN</name>
        <dbReference type="ChEBI" id="CHEBI:58210"/>
    </ligand>
</feature>
<feature type="binding site" evidence="1">
    <location>
        <position position="623"/>
    </location>
    <ligand>
        <name>substrate</name>
    </ligand>
</feature>
<feature type="binding site" evidence="1">
    <location>
        <begin position="682"/>
        <end position="684"/>
    </location>
    <ligand>
        <name>substrate</name>
    </ligand>
</feature>
<feature type="binding site" evidence="1">
    <location>
        <position position="723"/>
    </location>
    <ligand>
        <name>FMN</name>
        <dbReference type="ChEBI" id="CHEBI:58210"/>
    </ligand>
</feature>
<feature type="binding site" evidence="1">
    <location>
        <begin position="750"/>
        <end position="751"/>
    </location>
    <ligand>
        <name>substrate</name>
    </ligand>
</feature>
<feature type="binding site" evidence="1">
    <location>
        <position position="781"/>
    </location>
    <ligand>
        <name>FMN</name>
        <dbReference type="ChEBI" id="CHEBI:58210"/>
    </ligand>
</feature>
<feature type="binding site" evidence="1">
    <location>
        <begin position="807"/>
        <end position="809"/>
    </location>
    <ligand>
        <name>FMN</name>
        <dbReference type="ChEBI" id="CHEBI:58210"/>
    </ligand>
</feature>
<feature type="binding site" evidence="1">
    <location>
        <begin position="830"/>
        <end position="831"/>
    </location>
    <ligand>
        <name>FMN</name>
        <dbReference type="ChEBI" id="CHEBI:58210"/>
    </ligand>
</feature>
<feature type="binding site" evidence="1">
    <location>
        <position position="964"/>
    </location>
    <ligand>
        <name>[4Fe-4S] cluster</name>
        <dbReference type="ChEBI" id="CHEBI:49883"/>
        <label>3</label>
    </ligand>
</feature>
<feature type="binding site" evidence="1">
    <location>
        <position position="967"/>
    </location>
    <ligand>
        <name>[4Fe-4S] cluster</name>
        <dbReference type="ChEBI" id="CHEBI:49883"/>
        <label>3</label>
    </ligand>
</feature>
<feature type="binding site" evidence="1">
    <location>
        <position position="970"/>
    </location>
    <ligand>
        <name>[4Fe-4S] cluster</name>
        <dbReference type="ChEBI" id="CHEBI:49883"/>
        <label>3</label>
    </ligand>
</feature>
<feature type="binding site" evidence="1">
    <location>
        <position position="974"/>
    </location>
    <ligand>
        <name>[4Fe-4S] cluster</name>
        <dbReference type="ChEBI" id="CHEBI:49883"/>
        <label>3</label>
    </ligand>
</feature>
<feature type="binding site" evidence="1">
    <location>
        <position position="998"/>
    </location>
    <ligand>
        <name>[4Fe-4S] cluster</name>
        <dbReference type="ChEBI" id="CHEBI:49883"/>
        <label>4</label>
    </ligand>
</feature>
<feature type="binding site" evidence="1">
    <location>
        <position position="1001"/>
    </location>
    <ligand>
        <name>[4Fe-4S] cluster</name>
        <dbReference type="ChEBI" id="CHEBI:49883"/>
        <label>4</label>
    </ligand>
</feature>
<feature type="binding site" evidence="1">
    <location>
        <position position="1004"/>
    </location>
    <ligand>
        <name>[4Fe-4S] cluster</name>
        <dbReference type="ChEBI" id="CHEBI:49883"/>
        <label>4</label>
    </ligand>
</feature>
<feature type="binding site" evidence="1">
    <location>
        <position position="1008"/>
    </location>
    <ligand>
        <name>[4Fe-4S] cluster</name>
        <dbReference type="ChEBI" id="CHEBI:49883"/>
        <label>4</label>
    </ligand>
</feature>
<proteinExistence type="inferred from homology"/>
<sequence length="1059" mass="115301">MTPKPNTTSPTNNLPLLSKDSPDIESLLILNPKVQDKANAVPSAVTKKNKHNWKRNEEKGCGSTCGESKLKNDFRDIKHTTLSERGALKEAMRCLKCADAPCQKSCPTQLDVKSFITSISNKNYYGAARQILSDNPLGLTCGMICPTSDLCVGSCNLQASEEGAINIGGLQQYACDVFKQMNVRQIVSKEVRENRNASHKEQVALIGCGPASISCASFLARLGYTDITIYEKRAYIGGLSSAEIPQFRLPYDVVDFEIQLARDIGVQIETNRPLGKDGLTLAKLKEQGAAAVFIGIGNPEPKIDPLFEGLTIENGFYTSKNYLPAVAAASKPGMCGCKRTPLPTMRGRVVVLGAGDTAMDCATSALRCGASRVTIAFRKGFTGIRAVPEEMEAAKEEKCEFLPFSAPRKINVKDGRIVSIEFNKTEQDDNGKWYEDEEQIVILKCDYVISAFGSTLKEDAVLSALQPCQLNKWGGIEVDSTTQQTSEKWVFAGGDVAGVAETTVESVNDGKIAAWNMHRYIQSLHGNQVSETPELPQFFTPIDEVDISVDMCGVKFENPFGLASAPPTTSGPMCRRAFEQGWGFILTKTYGLDKDLVTNVSPRIVRGSTSGPLYGPNQGSFMNIELISEKSCEYWLQCIRELKRDHPTKIVIASIMCVYNKADWIELATKSEEAGADILELNLSCPHGMGEKGMGLACGQSPEIVKEICRWVRACVKIPFFPKMTPNITDVREIARAARDGGASGVTATNTVSSLMHMKADGNAWPAIGSTKRTTYGGMSGSAIRPIAMKAVSSIANELDGFPIMATGGIESAETGLGFLMAGASVLQVCSAVQNQDFTVVDDYCTGLKALLYLSGAESLKNWDGQSPPIEKHQKGKPILLQGQKKMPFFGKYRDEREKLEAIKLSESNLLDTENYHFASRPDTQVSRVPTVEDVIGKALPRIGPYVTLDNQEQKVAIIDDDMCINCGKCYMTCNDSGYQAITFDPVTHQPHVTEDDCTGCTLCYSVCPIPECIEMVPRTGPWKAPKRGVKPSVEPGTPKVVKVDQRGRVILDTTGGMQ</sequence>
<organism>
    <name type="scientific">Caenorhabditis elegans</name>
    <dbReference type="NCBI Taxonomy" id="6239"/>
    <lineage>
        <taxon>Eukaryota</taxon>
        <taxon>Metazoa</taxon>
        <taxon>Ecdysozoa</taxon>
        <taxon>Nematoda</taxon>
        <taxon>Chromadorea</taxon>
        <taxon>Rhabditida</taxon>
        <taxon>Rhabditina</taxon>
        <taxon>Rhabditomorpha</taxon>
        <taxon>Rhabditoidea</taxon>
        <taxon>Rhabditidae</taxon>
        <taxon>Peloderinae</taxon>
        <taxon>Caenorhabditis</taxon>
    </lineage>
</organism>
<accession>Q18164</accession>